<reference key="1">
    <citation type="journal article" date="2007" name="Genome Res.">
        <title>Genome sequence of a proteolytic (Group I) Clostridium botulinum strain Hall A and comparative analysis of the clostridial genomes.</title>
        <authorList>
            <person name="Sebaihia M."/>
            <person name="Peck M.W."/>
            <person name="Minton N.P."/>
            <person name="Thomson N.R."/>
            <person name="Holden M.T.G."/>
            <person name="Mitchell W.J."/>
            <person name="Carter A.T."/>
            <person name="Bentley S.D."/>
            <person name="Mason D.R."/>
            <person name="Crossman L."/>
            <person name="Paul C.J."/>
            <person name="Ivens A."/>
            <person name="Wells-Bennik M.H.J."/>
            <person name="Davis I.J."/>
            <person name="Cerdeno-Tarraga A.M."/>
            <person name="Churcher C."/>
            <person name="Quail M.A."/>
            <person name="Chillingworth T."/>
            <person name="Feltwell T."/>
            <person name="Fraser A."/>
            <person name="Goodhead I."/>
            <person name="Hance Z."/>
            <person name="Jagels K."/>
            <person name="Larke N."/>
            <person name="Maddison M."/>
            <person name="Moule S."/>
            <person name="Mungall K."/>
            <person name="Norbertczak H."/>
            <person name="Rabbinowitsch E."/>
            <person name="Sanders M."/>
            <person name="Simmonds M."/>
            <person name="White B."/>
            <person name="Whithead S."/>
            <person name="Parkhill J."/>
        </authorList>
    </citation>
    <scope>NUCLEOTIDE SEQUENCE [LARGE SCALE GENOMIC DNA]</scope>
    <source>
        <strain>Hall / ATCC 3502 / NCTC 13319 / Type A</strain>
    </source>
</reference>
<reference key="2">
    <citation type="journal article" date="2007" name="PLoS ONE">
        <title>Analysis of the neurotoxin complex genes in Clostridium botulinum A1-A4 and B1 strains: BoNT/A3, /Ba4 and /B1 clusters are located within plasmids.</title>
        <authorList>
            <person name="Smith T.J."/>
            <person name="Hill K.K."/>
            <person name="Foley B.T."/>
            <person name="Detter J.C."/>
            <person name="Munk A.C."/>
            <person name="Bruce D.C."/>
            <person name="Doggett N.A."/>
            <person name="Smith L.A."/>
            <person name="Marks J.D."/>
            <person name="Xie G."/>
            <person name="Brettin T.S."/>
        </authorList>
    </citation>
    <scope>NUCLEOTIDE SEQUENCE [LARGE SCALE GENOMIC DNA]</scope>
    <source>
        <strain>Hall / ATCC 3502 / NCTC 13319 / Type A</strain>
    </source>
</reference>
<organism>
    <name type="scientific">Clostridium botulinum (strain Hall / ATCC 3502 / NCTC 13319 / Type A)</name>
    <dbReference type="NCBI Taxonomy" id="441771"/>
    <lineage>
        <taxon>Bacteria</taxon>
        <taxon>Bacillati</taxon>
        <taxon>Bacillota</taxon>
        <taxon>Clostridia</taxon>
        <taxon>Eubacteriales</taxon>
        <taxon>Clostridiaceae</taxon>
        <taxon>Clostridium</taxon>
    </lineage>
</organism>
<feature type="chain" id="PRO_5000246800" description="Penicillin-binding protein 1A">
    <location>
        <begin position="1"/>
        <end position="830"/>
    </location>
</feature>
<feature type="topological domain" description="Cytoplasmic" evidence="4">
    <location>
        <begin position="1"/>
        <end position="18"/>
    </location>
</feature>
<feature type="transmembrane region" description="Helical; Signal-anchor for type II membrane protein" evidence="4">
    <location>
        <begin position="19"/>
        <end position="39"/>
    </location>
</feature>
<feature type="topological domain" description="Extracellular" evidence="4">
    <location>
        <begin position="40"/>
        <end position="830"/>
    </location>
</feature>
<feature type="region of interest" description="Transglycosylase" evidence="1">
    <location>
        <begin position="57"/>
        <end position="229"/>
    </location>
</feature>
<feature type="region of interest" description="Transpeptidase" evidence="1">
    <location>
        <begin position="357"/>
        <end position="641"/>
    </location>
</feature>
<feature type="region of interest" description="Disordered" evidence="5">
    <location>
        <begin position="754"/>
        <end position="830"/>
    </location>
</feature>
<feature type="compositionally biased region" description="Basic and acidic residues" evidence="5">
    <location>
        <begin position="760"/>
        <end position="786"/>
    </location>
</feature>
<feature type="compositionally biased region" description="Low complexity" evidence="5">
    <location>
        <begin position="787"/>
        <end position="820"/>
    </location>
</feature>
<feature type="compositionally biased region" description="Basic and acidic residues" evidence="5">
    <location>
        <begin position="821"/>
        <end position="830"/>
    </location>
</feature>
<feature type="active site" description="Proton donor; for transglycosylase activity" evidence="3">
    <location>
        <position position="96"/>
    </location>
</feature>
<feature type="active site" description="Acyl-ester intermediate; for transpeptidase activity" evidence="3">
    <location>
        <position position="398"/>
    </location>
</feature>
<dbReference type="EC" id="2.4.99.28" evidence="2"/>
<dbReference type="EC" id="3.4.16.4" evidence="2"/>
<dbReference type="EMBL" id="CP000727">
    <property type="protein sequence ID" value="ABS36996.1"/>
    <property type="molecule type" value="Genomic_DNA"/>
</dbReference>
<dbReference type="EMBL" id="AM412317">
    <property type="protein sequence ID" value="CAL84646.1"/>
    <property type="molecule type" value="Genomic_DNA"/>
</dbReference>
<dbReference type="RefSeq" id="WP_012048098.1">
    <property type="nucleotide sequence ID" value="NC_009698.1"/>
</dbReference>
<dbReference type="RefSeq" id="YP_001255575.1">
    <property type="nucleotide sequence ID" value="NC_009495.1"/>
</dbReference>
<dbReference type="RefSeq" id="YP_001388812.1">
    <property type="nucleotide sequence ID" value="NC_009698.1"/>
</dbReference>
<dbReference type="SMR" id="A5I6G4"/>
<dbReference type="CAZy" id="GT51">
    <property type="family name" value="Glycosyltransferase Family 51"/>
</dbReference>
<dbReference type="GeneID" id="5185759"/>
<dbReference type="KEGG" id="cbh:CLC_2985"/>
<dbReference type="KEGG" id="cbo:CBO3083"/>
<dbReference type="PATRIC" id="fig|413999.7.peg.3061"/>
<dbReference type="HOGENOM" id="CLU_006354_2_2_9"/>
<dbReference type="UniPathway" id="UPA00219"/>
<dbReference type="PRO" id="PR:A5I6G4"/>
<dbReference type="Proteomes" id="UP000001986">
    <property type="component" value="Chromosome"/>
</dbReference>
<dbReference type="GO" id="GO:0005886">
    <property type="term" value="C:plasma membrane"/>
    <property type="evidence" value="ECO:0000318"/>
    <property type="project" value="GO_Central"/>
</dbReference>
<dbReference type="GO" id="GO:0008658">
    <property type="term" value="F:penicillin binding"/>
    <property type="evidence" value="ECO:0007669"/>
    <property type="project" value="InterPro"/>
</dbReference>
<dbReference type="GO" id="GO:0008955">
    <property type="term" value="F:peptidoglycan glycosyltransferase activity"/>
    <property type="evidence" value="ECO:0000318"/>
    <property type="project" value="GO_Central"/>
</dbReference>
<dbReference type="GO" id="GO:0009002">
    <property type="term" value="F:serine-type D-Ala-D-Ala carboxypeptidase activity"/>
    <property type="evidence" value="ECO:0007669"/>
    <property type="project" value="UniProtKB-EC"/>
</dbReference>
<dbReference type="GO" id="GO:0071555">
    <property type="term" value="P:cell wall organization"/>
    <property type="evidence" value="ECO:0007669"/>
    <property type="project" value="UniProtKB-KW"/>
</dbReference>
<dbReference type="GO" id="GO:0009252">
    <property type="term" value="P:peptidoglycan biosynthetic process"/>
    <property type="evidence" value="ECO:0000318"/>
    <property type="project" value="GO_Central"/>
</dbReference>
<dbReference type="GO" id="GO:0006508">
    <property type="term" value="P:proteolysis"/>
    <property type="evidence" value="ECO:0007669"/>
    <property type="project" value="UniProtKB-KW"/>
</dbReference>
<dbReference type="GO" id="GO:0008360">
    <property type="term" value="P:regulation of cell shape"/>
    <property type="evidence" value="ECO:0007669"/>
    <property type="project" value="UniProtKB-KW"/>
</dbReference>
<dbReference type="GO" id="GO:0046677">
    <property type="term" value="P:response to antibiotic"/>
    <property type="evidence" value="ECO:0007669"/>
    <property type="project" value="UniProtKB-KW"/>
</dbReference>
<dbReference type="FunFam" id="1.10.3810.10:FF:000001">
    <property type="entry name" value="Penicillin-binding protein 1A"/>
    <property type="match status" value="1"/>
</dbReference>
<dbReference type="FunFam" id="3.40.710.10:FF:000112">
    <property type="entry name" value="Penicillin-binding protein 1A"/>
    <property type="match status" value="1"/>
</dbReference>
<dbReference type="Gene3D" id="1.10.3810.10">
    <property type="entry name" value="Biosynthetic peptidoglycan transglycosylase-like"/>
    <property type="match status" value="1"/>
</dbReference>
<dbReference type="Gene3D" id="3.40.710.10">
    <property type="entry name" value="DD-peptidase/beta-lactamase superfamily"/>
    <property type="match status" value="1"/>
</dbReference>
<dbReference type="InterPro" id="IPR012338">
    <property type="entry name" value="Beta-lactam/transpept-like"/>
</dbReference>
<dbReference type="InterPro" id="IPR001264">
    <property type="entry name" value="Glyco_trans_51"/>
</dbReference>
<dbReference type="InterPro" id="IPR050396">
    <property type="entry name" value="Glycosyltr_51/Transpeptidase"/>
</dbReference>
<dbReference type="InterPro" id="IPR023346">
    <property type="entry name" value="Lysozyme-like_dom_sf"/>
</dbReference>
<dbReference type="InterPro" id="IPR036950">
    <property type="entry name" value="PBP_transglycosylase"/>
</dbReference>
<dbReference type="InterPro" id="IPR001460">
    <property type="entry name" value="PCN-bd_Tpept"/>
</dbReference>
<dbReference type="NCBIfam" id="TIGR02074">
    <property type="entry name" value="PBP_1a_fam"/>
    <property type="match status" value="1"/>
</dbReference>
<dbReference type="PANTHER" id="PTHR32282">
    <property type="entry name" value="BINDING PROTEIN TRANSPEPTIDASE, PUTATIVE-RELATED"/>
    <property type="match status" value="1"/>
</dbReference>
<dbReference type="PANTHER" id="PTHR32282:SF33">
    <property type="entry name" value="PEPTIDOGLYCAN GLYCOSYLTRANSFERASE"/>
    <property type="match status" value="1"/>
</dbReference>
<dbReference type="Pfam" id="PF00912">
    <property type="entry name" value="Transgly"/>
    <property type="match status" value="1"/>
</dbReference>
<dbReference type="Pfam" id="PF00905">
    <property type="entry name" value="Transpeptidase"/>
    <property type="match status" value="1"/>
</dbReference>
<dbReference type="SUPFAM" id="SSF56601">
    <property type="entry name" value="beta-lactamase/transpeptidase-like"/>
    <property type="match status" value="1"/>
</dbReference>
<dbReference type="SUPFAM" id="SSF53955">
    <property type="entry name" value="Lysozyme-like"/>
    <property type="match status" value="1"/>
</dbReference>
<accession>A5I6G4</accession>
<accession>A7G7P7</accession>
<protein>
    <recommendedName>
        <fullName>Penicillin-binding protein 1A</fullName>
        <shortName>PBP1a</shortName>
    </recommendedName>
    <domain>
        <recommendedName>
            <fullName>Penicillin-insensitive transglycosylase</fullName>
            <ecNumber evidence="2">2.4.99.28</ecNumber>
        </recommendedName>
        <alternativeName>
            <fullName>Peptidoglycan TGase</fullName>
        </alternativeName>
    </domain>
    <domain>
        <recommendedName>
            <fullName>Penicillin-sensitive transpeptidase</fullName>
            <ecNumber evidence="2">3.4.16.4</ecNumber>
        </recommendedName>
        <alternativeName>
            <fullName>DD-transpeptidase</fullName>
        </alternativeName>
    </domain>
</protein>
<sequence>MGKKKKKRKSSAFKIILNVFLSIFLVAGVAFGGIVFAMIKTAPPLNVQQVLTFDEPSILYDDKGQYMDKVITNEQRIVVDYKNVPQNLKNAFVSIEDERFYKHHGVDIKRFTGVILINVTNKIKRSSKLQGASTLTQQLIKNTVLSSEVSIKRKVQEMYLSIQLEKELSKDEILGAYMNSIFLGGNALGVEAASKQYFNKSVKDLSLIECAFIAGVPQSPSVYYPYSSASKKNPSIYLNRTKTVLYKMLDNGYITQNDYNKALKDLDSKKLVFAKPSAPSNKLAYEWFSIPAIEQVKKDLKTQYKYDDKQIHNLLVNGGLKVYTTMNKNLQDKTQNTINNAYYLNSYKSNGMIYPQASAVIMDYHNGEVKTIIGGRGDQPARSYNRAASYNYLRPAGSSIKPLTVYSAAIDSKKATAATGFEDSPIPNNIGRKYSSGAPYNPKNSPDIYYGYVNVREALMRSINVVAVKLVDKIGLNTSIQYAEKFGIPIDQHDRSSIASLSLGELHKGTNPLIMAQAYGVFGNNGTYTEAKLYTKVVDRTGKVLLEPKTNTKKVLSPEAAFITYDMLQGPVSESGTGPQANFGNMEVRGKTGTSSDMKNLWFCGLTPYYSAAVWIGNDNSSTVDGVYSSTAARLWGDIMKEFHVNLPYKQVQKPASVVTANVDRISGKLPTQLSYRDPRGSTVYNEFFINGTIPTEYDDIHVEAQINKLTGKLASKFTPSFLVESRVFLRRDYSPGVELLDQQWLLPYSIDEGGSLPPTEEKNNSNTRDKNKDKNKNKNKDKNPSQDKPNNNNNDNNSNNNNNNNDNNNNTKPPENDSNQNHEDNKNKQ</sequence>
<proteinExistence type="inferred from homology"/>
<gene>
    <name type="primary">pbpA</name>
    <name type="ordered locus">CBO3083</name>
    <name type="ordered locus">CLC_2985</name>
</gene>
<name>PBPA_CLOBH</name>
<evidence type="ECO:0000250" key="1"/>
<evidence type="ECO:0000250" key="2">
    <source>
        <dbReference type="UniProtKB" id="P02918"/>
    </source>
</evidence>
<evidence type="ECO:0000250" key="3">
    <source>
        <dbReference type="UniProtKB" id="P02919"/>
    </source>
</evidence>
<evidence type="ECO:0000255" key="4"/>
<evidence type="ECO:0000256" key="5">
    <source>
        <dbReference type="SAM" id="MobiDB-lite"/>
    </source>
</evidence>
<evidence type="ECO:0000305" key="6"/>
<keyword id="KW-0046">Antibiotic resistance</keyword>
<keyword id="KW-0121">Carboxypeptidase</keyword>
<keyword id="KW-1003">Cell membrane</keyword>
<keyword id="KW-0133">Cell shape</keyword>
<keyword id="KW-0961">Cell wall biogenesis/degradation</keyword>
<keyword id="KW-0328">Glycosyltransferase</keyword>
<keyword id="KW-0378">Hydrolase</keyword>
<keyword id="KW-0472">Membrane</keyword>
<keyword id="KW-0511">Multifunctional enzyme</keyword>
<keyword id="KW-0573">Peptidoglycan synthesis</keyword>
<keyword id="KW-0645">Protease</keyword>
<keyword id="KW-1185">Reference proteome</keyword>
<keyword id="KW-0735">Signal-anchor</keyword>
<keyword id="KW-0808">Transferase</keyword>
<keyword id="KW-0812">Transmembrane</keyword>
<keyword id="KW-1133">Transmembrane helix</keyword>
<comment type="function">
    <text evidence="1">Cell wall formation. Synthesis of cross-linked peptidoglycan from the lipid intermediates. The enzyme has a penicillin-insensitive transglycosylase N-terminal domain (formation of linear glycan strands) and a penicillin-sensitive transpeptidase C-terminal domain (cross-linking of the peptide subunits).</text>
</comment>
<comment type="catalytic activity">
    <reaction evidence="2">
        <text>[GlcNAc-(1-&gt;4)-Mur2Ac(oyl-L-Ala-gamma-D-Glu-L-Lys-D-Ala-D-Ala)](n)-di-trans,octa-cis-undecaprenyl diphosphate + beta-D-GlcNAc-(1-&gt;4)-Mur2Ac(oyl-L-Ala-gamma-D-Glu-L-Lys-D-Ala-D-Ala)-di-trans,octa-cis-undecaprenyl diphosphate = [GlcNAc-(1-&gt;4)-Mur2Ac(oyl-L-Ala-gamma-D-Glu-L-Lys-D-Ala-D-Ala)](n+1)-di-trans,octa-cis-undecaprenyl diphosphate + di-trans,octa-cis-undecaprenyl diphosphate + H(+)</text>
        <dbReference type="Rhea" id="RHEA:23708"/>
        <dbReference type="Rhea" id="RHEA-COMP:9602"/>
        <dbReference type="Rhea" id="RHEA-COMP:9603"/>
        <dbReference type="ChEBI" id="CHEBI:15378"/>
        <dbReference type="ChEBI" id="CHEBI:58405"/>
        <dbReference type="ChEBI" id="CHEBI:60033"/>
        <dbReference type="ChEBI" id="CHEBI:78435"/>
        <dbReference type="EC" id="2.4.99.28"/>
    </reaction>
</comment>
<comment type="catalytic activity">
    <reaction evidence="2">
        <text>Preferential cleavage: (Ac)2-L-Lys-D-Ala-|-D-Ala. Also transpeptidation of peptidyl-alanyl moieties that are N-acyl substituents of D-alanine.</text>
        <dbReference type="EC" id="3.4.16.4"/>
    </reaction>
</comment>
<comment type="pathway">
    <text>Cell wall biogenesis; peptidoglycan biosynthesis.</text>
</comment>
<comment type="subcellular location">
    <subcellularLocation>
        <location evidence="6">Cell membrane</location>
        <topology evidence="6">Single-pass type II membrane protein</topology>
    </subcellularLocation>
</comment>
<comment type="similarity">
    <text evidence="6">In the N-terminal section; belongs to the glycosyltransferase 51 family.</text>
</comment>
<comment type="similarity">
    <text evidence="6">In the C-terminal section; belongs to the transpeptidase family.</text>
</comment>